<dbReference type="EMBL" id="AE009951">
    <property type="protein sequence ID" value="AAL93927.1"/>
    <property type="molecule type" value="Genomic_DNA"/>
</dbReference>
<dbReference type="RefSeq" id="NP_602628.1">
    <property type="nucleotide sequence ID" value="NC_003454.1"/>
</dbReference>
<dbReference type="RefSeq" id="WP_005903027.1">
    <property type="nucleotide sequence ID" value="NZ_OZ209243.1"/>
</dbReference>
<dbReference type="SMR" id="Q8RI10"/>
<dbReference type="FunCoup" id="Q8RI10">
    <property type="interactions" value="421"/>
</dbReference>
<dbReference type="STRING" id="190304.FN1828"/>
<dbReference type="PaxDb" id="190304-FN1828"/>
<dbReference type="EnsemblBacteria" id="AAL93927">
    <property type="protein sequence ID" value="AAL93927"/>
    <property type="gene ID" value="FN1828"/>
</dbReference>
<dbReference type="GeneID" id="79783150"/>
<dbReference type="KEGG" id="fnu:FN1828"/>
<dbReference type="PATRIC" id="fig|190304.8.peg.303"/>
<dbReference type="eggNOG" id="COG0359">
    <property type="taxonomic scope" value="Bacteria"/>
</dbReference>
<dbReference type="HOGENOM" id="CLU_078938_3_0_0"/>
<dbReference type="InParanoid" id="Q8RI10"/>
<dbReference type="BioCyc" id="FNUC190304:G1FZS-325-MONOMER"/>
<dbReference type="Proteomes" id="UP000002521">
    <property type="component" value="Chromosome"/>
</dbReference>
<dbReference type="GO" id="GO:0022625">
    <property type="term" value="C:cytosolic large ribosomal subunit"/>
    <property type="evidence" value="ECO:0000318"/>
    <property type="project" value="GO_Central"/>
</dbReference>
<dbReference type="GO" id="GO:0019843">
    <property type="term" value="F:rRNA binding"/>
    <property type="evidence" value="ECO:0007669"/>
    <property type="project" value="UniProtKB-UniRule"/>
</dbReference>
<dbReference type="GO" id="GO:0003735">
    <property type="term" value="F:structural constituent of ribosome"/>
    <property type="evidence" value="ECO:0007669"/>
    <property type="project" value="InterPro"/>
</dbReference>
<dbReference type="GO" id="GO:0006412">
    <property type="term" value="P:translation"/>
    <property type="evidence" value="ECO:0007669"/>
    <property type="project" value="UniProtKB-UniRule"/>
</dbReference>
<dbReference type="FunFam" id="3.40.5.10:FF:000010">
    <property type="entry name" value="50S ribosomal protein L9"/>
    <property type="match status" value="1"/>
</dbReference>
<dbReference type="Gene3D" id="3.10.430.100">
    <property type="entry name" value="Ribosomal protein L9, C-terminal domain"/>
    <property type="match status" value="1"/>
</dbReference>
<dbReference type="Gene3D" id="3.40.5.10">
    <property type="entry name" value="Ribosomal protein L9, N-terminal domain"/>
    <property type="match status" value="1"/>
</dbReference>
<dbReference type="HAMAP" id="MF_00503">
    <property type="entry name" value="Ribosomal_bL9"/>
    <property type="match status" value="1"/>
</dbReference>
<dbReference type="InterPro" id="IPR000244">
    <property type="entry name" value="Ribosomal_bL9"/>
</dbReference>
<dbReference type="InterPro" id="IPR009027">
    <property type="entry name" value="Ribosomal_bL9/RNase_H1_N"/>
</dbReference>
<dbReference type="InterPro" id="IPR020594">
    <property type="entry name" value="Ribosomal_bL9_bac/chp"/>
</dbReference>
<dbReference type="InterPro" id="IPR020069">
    <property type="entry name" value="Ribosomal_bL9_C"/>
</dbReference>
<dbReference type="InterPro" id="IPR036791">
    <property type="entry name" value="Ribosomal_bL9_C_sf"/>
</dbReference>
<dbReference type="InterPro" id="IPR020070">
    <property type="entry name" value="Ribosomal_bL9_N"/>
</dbReference>
<dbReference type="InterPro" id="IPR036935">
    <property type="entry name" value="Ribosomal_bL9_N_sf"/>
</dbReference>
<dbReference type="NCBIfam" id="TIGR00158">
    <property type="entry name" value="L9"/>
    <property type="match status" value="1"/>
</dbReference>
<dbReference type="PANTHER" id="PTHR21368">
    <property type="entry name" value="50S RIBOSOMAL PROTEIN L9"/>
    <property type="match status" value="1"/>
</dbReference>
<dbReference type="Pfam" id="PF03948">
    <property type="entry name" value="Ribosomal_L9_C"/>
    <property type="match status" value="1"/>
</dbReference>
<dbReference type="Pfam" id="PF01281">
    <property type="entry name" value="Ribosomal_L9_N"/>
    <property type="match status" value="1"/>
</dbReference>
<dbReference type="SUPFAM" id="SSF55658">
    <property type="entry name" value="L9 N-domain-like"/>
    <property type="match status" value="1"/>
</dbReference>
<dbReference type="SUPFAM" id="SSF55653">
    <property type="entry name" value="Ribosomal protein L9 C-domain"/>
    <property type="match status" value="1"/>
</dbReference>
<dbReference type="PROSITE" id="PS00651">
    <property type="entry name" value="RIBOSOMAL_L9"/>
    <property type="match status" value="1"/>
</dbReference>
<feature type="chain" id="PRO_0000176639" description="Large ribosomal subunit protein bL9">
    <location>
        <begin position="1"/>
        <end position="149"/>
    </location>
</feature>
<sequence>MAKIQVILLEDVAGQGRKGEIVTVSDGYAHNFLLKGKKGVLATPEELQKIENRKKKEAKKQEEERNKSLELKKLLESKVLDIPVKAGENGKLFGAITSKEIASQIKEELGLDIDKKKIEANIKNLGPDEVHIKLFTDVKAVIKVNVIAK</sequence>
<protein>
    <recommendedName>
        <fullName evidence="1">Large ribosomal subunit protein bL9</fullName>
    </recommendedName>
    <alternativeName>
        <fullName evidence="2">50S ribosomal protein L9</fullName>
    </alternativeName>
</protein>
<organism>
    <name type="scientific">Fusobacterium nucleatum subsp. nucleatum (strain ATCC 25586 / DSM 15643 / BCRC 10681 / CIP 101130 / JCM 8532 / KCTC 2640 / LMG 13131 / VPI 4355)</name>
    <dbReference type="NCBI Taxonomy" id="190304"/>
    <lineage>
        <taxon>Bacteria</taxon>
        <taxon>Fusobacteriati</taxon>
        <taxon>Fusobacteriota</taxon>
        <taxon>Fusobacteriia</taxon>
        <taxon>Fusobacteriales</taxon>
        <taxon>Fusobacteriaceae</taxon>
        <taxon>Fusobacterium</taxon>
    </lineage>
</organism>
<accession>Q8RI10</accession>
<name>RL9_FUSNN</name>
<gene>
    <name evidence="1" type="primary">rplI</name>
    <name type="ordered locus">FN1828</name>
</gene>
<comment type="function">
    <text evidence="1">Binds to the 23S rRNA.</text>
</comment>
<comment type="similarity">
    <text evidence="1">Belongs to the bacterial ribosomal protein bL9 family.</text>
</comment>
<reference key="1">
    <citation type="journal article" date="2002" name="J. Bacteriol.">
        <title>Genome sequence and analysis of the oral bacterium Fusobacterium nucleatum strain ATCC 25586.</title>
        <authorList>
            <person name="Kapatral V."/>
            <person name="Anderson I."/>
            <person name="Ivanova N."/>
            <person name="Reznik G."/>
            <person name="Los T."/>
            <person name="Lykidis A."/>
            <person name="Bhattacharyya A."/>
            <person name="Bartman A."/>
            <person name="Gardner W."/>
            <person name="Grechkin G."/>
            <person name="Zhu L."/>
            <person name="Vasieva O."/>
            <person name="Chu L."/>
            <person name="Kogan Y."/>
            <person name="Chaga O."/>
            <person name="Goltsman E."/>
            <person name="Bernal A."/>
            <person name="Larsen N."/>
            <person name="D'Souza M."/>
            <person name="Walunas T."/>
            <person name="Pusch G."/>
            <person name="Haselkorn R."/>
            <person name="Fonstein M."/>
            <person name="Kyrpides N.C."/>
            <person name="Overbeek R."/>
        </authorList>
    </citation>
    <scope>NUCLEOTIDE SEQUENCE [LARGE SCALE GENOMIC DNA]</scope>
    <source>
        <strain>ATCC 25586 / DSM 15643 / BCRC 10681 / CIP 101130 / JCM 8532 / KCTC 2640 / LMG 13131 / VPI 4355</strain>
    </source>
</reference>
<keyword id="KW-1185">Reference proteome</keyword>
<keyword id="KW-0687">Ribonucleoprotein</keyword>
<keyword id="KW-0689">Ribosomal protein</keyword>
<keyword id="KW-0694">RNA-binding</keyword>
<keyword id="KW-0699">rRNA-binding</keyword>
<evidence type="ECO:0000255" key="1">
    <source>
        <dbReference type="HAMAP-Rule" id="MF_00503"/>
    </source>
</evidence>
<evidence type="ECO:0000305" key="2"/>
<proteinExistence type="inferred from homology"/>